<reference key="1">
    <citation type="journal article" date="1993" name="Brain Res. Mol. Brain Res.">
        <title>Molecular cloning of rat growth inhibitory factor cDNA and the expression in the central nervous system.</title>
        <authorList>
            <person name="Kobayashi H."/>
            <person name="Uchida Y."/>
            <person name="Ihara Y."/>
            <person name="Nakajima K."/>
            <person name="Kohsaka S."/>
            <person name="Miyatake T."/>
            <person name="Tsuji S."/>
        </authorList>
    </citation>
    <scope>NUCLEOTIDE SEQUENCE [MRNA]</scope>
</reference>
<reference key="2">
    <citation type="journal article" date="1995" name="Biochem. Biophys. Res. Commun.">
        <title>Modulation of metallothionein-III mRNA content and growth rate of rat C6-glial cells by transfection with human 5-HT1D receptor genes.</title>
        <authorList>
            <person name="Amoureux M.C."/>
            <person name="Wurch T."/>
            <person name="Pauwels P.J."/>
        </authorList>
    </citation>
    <scope>NUCLEOTIDE SEQUENCE [MRNA]</scope>
    <source>
        <tissue>Glial tumor</tissue>
    </source>
</reference>
<reference key="3">
    <citation type="journal article" date="1999" name="Biochim. Biophys. Acta">
        <title>Structural and functional analysis of the rat metallothionein III genomic locus.</title>
        <authorList>
            <person name="Chapman G.A."/>
            <person name="Kay J."/>
            <person name="Kille P."/>
        </authorList>
    </citation>
    <scope>NUCLEOTIDE SEQUENCE [GENOMIC DNA]</scope>
    <source>
        <strain>Sprague-Dawley</strain>
    </source>
</reference>
<reference key="4">
    <citation type="journal article" date="2004" name="Genome Res.">
        <title>The status, quality, and expansion of the NIH full-length cDNA project: the Mammalian Gene Collection (MGC).</title>
        <authorList>
            <consortium name="The MGC Project Team"/>
        </authorList>
    </citation>
    <scope>NUCLEOTIDE SEQUENCE [LARGE SCALE MRNA]</scope>
    <source>
        <tissue>Pituitary</tissue>
    </source>
</reference>
<sequence length="66" mass="6809">MDPETCPCPTGGSCTCSDKCKCKGCKCTNCKKSCCSCCPAGCEKCAKDCVCKGEEGAKAEKCSCCQ</sequence>
<proteinExistence type="evidence at transcript level"/>
<comment type="function">
    <text evidence="1">Binds heavy metals. Contains three zinc and three copper atoms per polypeptide chain and only a negligible amount of cadmium. Inhibits survival and neurite formation of cortical neurons in vitro (By similarity).</text>
</comment>
<comment type="tissue specificity">
    <text>Brain.</text>
</comment>
<comment type="similarity">
    <text evidence="5">Belongs to the metallothionein superfamily. Type 1 family.</text>
</comment>
<keyword id="KW-0007">Acetylation</keyword>
<keyword id="KW-0186">Copper</keyword>
<keyword id="KW-0479">Metal-binding</keyword>
<keyword id="KW-0480">Metal-thiolate cluster</keyword>
<keyword id="KW-0597">Phosphoprotein</keyword>
<keyword id="KW-1185">Reference proteome</keyword>
<keyword id="KW-0862">Zinc</keyword>
<feature type="chain" id="PRO_0000197253" description="Metallothionein-3">
    <location>
        <begin position="1"/>
        <end position="66"/>
    </location>
</feature>
<feature type="region of interest" description="Beta">
    <location>
        <begin position="1"/>
        <end position="30"/>
    </location>
</feature>
<feature type="region of interest" description="Alpha">
    <location>
        <begin position="31"/>
        <end position="66"/>
    </location>
</feature>
<feature type="binding site" evidence="2">
    <location>
        <position position="6"/>
    </location>
    <ligand>
        <name>a divalent metal cation</name>
        <dbReference type="ChEBI" id="CHEBI:60240"/>
        <label>1</label>
        <note>in cluster B</note>
    </ligand>
</feature>
<feature type="binding site" evidence="2">
    <location>
        <position position="8"/>
    </location>
    <ligand>
        <name>a divalent metal cation</name>
        <dbReference type="ChEBI" id="CHEBI:60240"/>
        <label>1</label>
        <note>in cluster B</note>
    </ligand>
</feature>
<feature type="binding site" evidence="2">
    <location>
        <position position="8"/>
    </location>
    <ligand>
        <name>a divalent metal cation</name>
        <dbReference type="ChEBI" id="CHEBI:60240"/>
        <label>2</label>
        <note>in cluster B</note>
    </ligand>
</feature>
<feature type="binding site" evidence="2">
    <location>
        <position position="14"/>
    </location>
    <ligand>
        <name>a divalent metal cation</name>
        <dbReference type="ChEBI" id="CHEBI:60240"/>
        <label>2</label>
        <note>in cluster B</note>
    </ligand>
</feature>
<feature type="binding site" evidence="2">
    <location>
        <position position="16"/>
    </location>
    <ligand>
        <name>a divalent metal cation</name>
        <dbReference type="ChEBI" id="CHEBI:60240"/>
        <label>2</label>
        <note>in cluster B</note>
    </ligand>
</feature>
<feature type="binding site" evidence="2">
    <location>
        <position position="16"/>
    </location>
    <ligand>
        <name>a divalent metal cation</name>
        <dbReference type="ChEBI" id="CHEBI:60240"/>
        <label>3</label>
        <note>in cluster B</note>
    </ligand>
</feature>
<feature type="binding site" evidence="2">
    <location>
        <position position="20"/>
    </location>
    <ligand>
        <name>a divalent metal cation</name>
        <dbReference type="ChEBI" id="CHEBI:60240"/>
        <label>3</label>
        <note>in cluster B</note>
    </ligand>
</feature>
<feature type="binding site" evidence="2">
    <location>
        <position position="22"/>
    </location>
    <ligand>
        <name>a divalent metal cation</name>
        <dbReference type="ChEBI" id="CHEBI:60240"/>
        <label>1</label>
        <note>in cluster B</note>
    </ligand>
</feature>
<feature type="binding site" evidence="2">
    <location>
        <position position="25"/>
    </location>
    <ligand>
        <name>a divalent metal cation</name>
        <dbReference type="ChEBI" id="CHEBI:60240"/>
        <label>1</label>
        <note>in cluster B</note>
    </ligand>
</feature>
<feature type="binding site" evidence="2">
    <location>
        <position position="25"/>
    </location>
    <ligand>
        <name>a divalent metal cation</name>
        <dbReference type="ChEBI" id="CHEBI:60240"/>
        <label>3</label>
        <note>in cluster B</note>
    </ligand>
</feature>
<feature type="binding site" evidence="2">
    <location>
        <position position="27"/>
    </location>
    <ligand>
        <name>a divalent metal cation</name>
        <dbReference type="ChEBI" id="CHEBI:60240"/>
        <label>2</label>
        <note>in cluster B</note>
    </ligand>
</feature>
<feature type="binding site" evidence="2">
    <location>
        <position position="30"/>
    </location>
    <ligand>
        <name>a divalent metal cation</name>
        <dbReference type="ChEBI" id="CHEBI:60240"/>
        <label>3</label>
        <note>in cluster B</note>
    </ligand>
</feature>
<feature type="binding site" evidence="2">
    <location>
        <position position="34"/>
    </location>
    <ligand>
        <name>a divalent metal cation</name>
        <dbReference type="ChEBI" id="CHEBI:60240"/>
        <label>4</label>
        <note>in cluster A</note>
    </ligand>
</feature>
<feature type="binding site" evidence="2">
    <location>
        <position position="35"/>
    </location>
    <ligand>
        <name>a divalent metal cation</name>
        <dbReference type="ChEBI" id="CHEBI:60240"/>
        <label>4</label>
        <note>in cluster A</note>
    </ligand>
</feature>
<feature type="binding site" evidence="2">
    <location>
        <position position="35"/>
    </location>
    <ligand>
        <name>a divalent metal cation</name>
        <dbReference type="ChEBI" id="CHEBI:60240"/>
        <label>5</label>
        <note>in cluster A</note>
    </ligand>
</feature>
<feature type="binding site" evidence="2">
    <location>
        <position position="37"/>
    </location>
    <ligand>
        <name>a divalent metal cation</name>
        <dbReference type="ChEBI" id="CHEBI:60240"/>
        <label>5</label>
        <note>in cluster A</note>
    </ligand>
</feature>
<feature type="binding site" evidence="2">
    <location>
        <position position="38"/>
    </location>
    <ligand>
        <name>a divalent metal cation</name>
        <dbReference type="ChEBI" id="CHEBI:60240"/>
        <label>5</label>
        <note>in cluster A</note>
    </ligand>
</feature>
<feature type="binding site" evidence="2">
    <location>
        <position position="38"/>
    </location>
    <ligand>
        <name>a divalent metal cation</name>
        <dbReference type="ChEBI" id="CHEBI:60240"/>
        <label>6</label>
        <note>in cluster A</note>
    </ligand>
</feature>
<feature type="binding site" evidence="2">
    <location>
        <position position="42"/>
    </location>
    <ligand>
        <name>a divalent metal cation</name>
        <dbReference type="ChEBI" id="CHEBI:60240"/>
        <label>6</label>
        <note>in cluster A</note>
    </ligand>
</feature>
<feature type="binding site" evidence="2">
    <location>
        <position position="45"/>
    </location>
    <ligand>
        <name>a divalent metal cation</name>
        <dbReference type="ChEBI" id="CHEBI:60240"/>
        <label>4</label>
        <note>in cluster A</note>
    </ligand>
</feature>
<feature type="binding site" evidence="2">
    <location>
        <position position="45"/>
    </location>
    <ligand>
        <name>a divalent metal cation</name>
        <dbReference type="ChEBI" id="CHEBI:60240"/>
        <label>6</label>
        <note>in cluster A</note>
    </ligand>
</feature>
<feature type="binding site" evidence="2">
    <location>
        <position position="49"/>
    </location>
    <ligand>
        <name>a divalent metal cation</name>
        <dbReference type="ChEBI" id="CHEBI:60240"/>
        <label>4</label>
        <note>in cluster A</note>
    </ligand>
</feature>
<feature type="binding site" evidence="2">
    <location>
        <position position="51"/>
    </location>
    <ligand>
        <name>a divalent metal cation</name>
        <dbReference type="ChEBI" id="CHEBI:60240"/>
        <label>5</label>
        <note>in cluster A</note>
    </ligand>
</feature>
<feature type="binding site" evidence="2">
    <location>
        <position position="51"/>
    </location>
    <ligand>
        <name>a divalent metal cation</name>
        <dbReference type="ChEBI" id="CHEBI:60240"/>
        <label>7</label>
        <note>in cluster A</note>
    </ligand>
</feature>
<feature type="binding site" evidence="2">
    <location>
        <position position="62"/>
    </location>
    <ligand>
        <name>a divalent metal cation</name>
        <dbReference type="ChEBI" id="CHEBI:60240"/>
        <label>7</label>
        <note>in cluster A</note>
    </ligand>
</feature>
<feature type="binding site" evidence="2">
    <location>
        <position position="64"/>
    </location>
    <ligand>
        <name>a divalent metal cation</name>
        <dbReference type="ChEBI" id="CHEBI:60240"/>
        <label>7</label>
        <note>in cluster A</note>
    </ligand>
</feature>
<feature type="binding site" evidence="2">
    <location>
        <position position="65"/>
    </location>
    <ligand>
        <name>a divalent metal cation</name>
        <dbReference type="ChEBI" id="CHEBI:60240"/>
        <label>6</label>
        <note>in cluster A</note>
    </ligand>
</feature>
<feature type="binding site" evidence="2">
    <location>
        <position position="65"/>
    </location>
    <ligand>
        <name>a divalent metal cation</name>
        <dbReference type="ChEBI" id="CHEBI:60240"/>
        <label>7</label>
        <note>in cluster A</note>
    </ligand>
</feature>
<feature type="modified residue" description="N-acetylmethionine" evidence="4">
    <location>
        <position position="1"/>
    </location>
</feature>
<feature type="modified residue" description="Phosphoserine" evidence="3">
    <location>
        <position position="33"/>
    </location>
</feature>
<gene>
    <name type="primary">Mt3</name>
</gene>
<accession>P37361</accession>
<dbReference type="EMBL" id="S65838">
    <property type="protein sequence ID" value="AAB28366.1"/>
    <property type="molecule type" value="mRNA"/>
</dbReference>
<dbReference type="EMBL" id="X89603">
    <property type="protein sequence ID" value="CAA61762.1"/>
    <property type="molecule type" value="mRNA"/>
</dbReference>
<dbReference type="EMBL" id="Y08235">
    <property type="protein sequence ID" value="CAA69404.1"/>
    <property type="molecule type" value="Genomic_DNA"/>
</dbReference>
<dbReference type="EMBL" id="BC058453">
    <property type="protein sequence ID" value="AAH58453.1"/>
    <property type="molecule type" value="mRNA"/>
</dbReference>
<dbReference type="PIR" id="S58086">
    <property type="entry name" value="S58086"/>
</dbReference>
<dbReference type="RefSeq" id="NP_446420.1">
    <property type="nucleotide sequence ID" value="NM_053968.3"/>
</dbReference>
<dbReference type="SMR" id="P37361"/>
<dbReference type="FunCoup" id="P37361">
    <property type="interactions" value="243"/>
</dbReference>
<dbReference type="IntAct" id="P37361">
    <property type="interactions" value="2"/>
</dbReference>
<dbReference type="MINT" id="P37361"/>
<dbReference type="STRING" id="10116.ENSRNOP00000025669"/>
<dbReference type="iPTMnet" id="P37361"/>
<dbReference type="PhosphoSitePlus" id="P37361"/>
<dbReference type="PaxDb" id="10116-ENSRNOP00000025669"/>
<dbReference type="Ensembl" id="ENSRNOT00000025669.6">
    <property type="protein sequence ID" value="ENSRNOP00000025669.3"/>
    <property type="gene ID" value="ENSRNOG00000018958.6"/>
</dbReference>
<dbReference type="GeneID" id="117038"/>
<dbReference type="KEGG" id="rno:117038"/>
<dbReference type="UCSC" id="RGD:621252">
    <property type="organism name" value="rat"/>
</dbReference>
<dbReference type="AGR" id="RGD:621252"/>
<dbReference type="CTD" id="4504"/>
<dbReference type="RGD" id="621252">
    <property type="gene designation" value="Mt3"/>
</dbReference>
<dbReference type="eggNOG" id="KOG4738">
    <property type="taxonomic scope" value="Eukaryota"/>
</dbReference>
<dbReference type="GeneTree" id="ENSGT00950000182967"/>
<dbReference type="HOGENOM" id="CLU_171204_2_0_1"/>
<dbReference type="InParanoid" id="P37361"/>
<dbReference type="OMA" id="CEDSCKC"/>
<dbReference type="Reactome" id="R-RNO-5661231">
    <property type="pathway name" value="Metallothioneins bind metals"/>
</dbReference>
<dbReference type="PRO" id="PR:P37361"/>
<dbReference type="Proteomes" id="UP000002494">
    <property type="component" value="Chromosome 19"/>
</dbReference>
<dbReference type="Bgee" id="ENSRNOG00000018958">
    <property type="expression patterns" value="Expressed in Ammon's horn and 18 other cell types or tissues"/>
</dbReference>
<dbReference type="GO" id="GO:0097450">
    <property type="term" value="C:astrocyte end-foot"/>
    <property type="evidence" value="ECO:0000314"/>
    <property type="project" value="RGD"/>
</dbReference>
<dbReference type="GO" id="GO:0097449">
    <property type="term" value="C:astrocyte projection"/>
    <property type="evidence" value="ECO:0000314"/>
    <property type="project" value="RGD"/>
</dbReference>
<dbReference type="GO" id="GO:0030424">
    <property type="term" value="C:axon"/>
    <property type="evidence" value="ECO:0000314"/>
    <property type="project" value="RGD"/>
</dbReference>
<dbReference type="GO" id="GO:0005737">
    <property type="term" value="C:cytoplasm"/>
    <property type="evidence" value="ECO:0000266"/>
    <property type="project" value="RGD"/>
</dbReference>
<dbReference type="GO" id="GO:0043197">
    <property type="term" value="C:dendritic spine"/>
    <property type="evidence" value="ECO:0000314"/>
    <property type="project" value="RGD"/>
</dbReference>
<dbReference type="GO" id="GO:0005615">
    <property type="term" value="C:extracellular space"/>
    <property type="evidence" value="ECO:0000314"/>
    <property type="project" value="RGD"/>
</dbReference>
<dbReference type="GO" id="GO:0016234">
    <property type="term" value="C:inclusion body"/>
    <property type="evidence" value="ECO:0000250"/>
    <property type="project" value="UniProtKB"/>
</dbReference>
<dbReference type="GO" id="GO:0005874">
    <property type="term" value="C:microtubule"/>
    <property type="evidence" value="ECO:0000314"/>
    <property type="project" value="RGD"/>
</dbReference>
<dbReference type="GO" id="GO:0005741">
    <property type="term" value="C:mitochondrial outer membrane"/>
    <property type="evidence" value="ECO:0000314"/>
    <property type="project" value="RGD"/>
</dbReference>
<dbReference type="GO" id="GO:0005634">
    <property type="term" value="C:nucleus"/>
    <property type="evidence" value="ECO:0000250"/>
    <property type="project" value="UniProtKB"/>
</dbReference>
<dbReference type="GO" id="GO:0048471">
    <property type="term" value="C:perinuclear region of cytoplasm"/>
    <property type="evidence" value="ECO:0000250"/>
    <property type="project" value="UniProtKB"/>
</dbReference>
<dbReference type="GO" id="GO:0005840">
    <property type="term" value="C:ribosome"/>
    <property type="evidence" value="ECO:0000314"/>
    <property type="project" value="RGD"/>
</dbReference>
<dbReference type="GO" id="GO:0008021">
    <property type="term" value="C:synaptic vesicle"/>
    <property type="evidence" value="ECO:0000314"/>
    <property type="project" value="RGD"/>
</dbReference>
<dbReference type="GO" id="GO:0046870">
    <property type="term" value="F:cadmium ion binding"/>
    <property type="evidence" value="ECO:0000250"/>
    <property type="project" value="UniProtKB"/>
</dbReference>
<dbReference type="GO" id="GO:0005507">
    <property type="term" value="F:copper ion binding"/>
    <property type="evidence" value="ECO:0000314"/>
    <property type="project" value="RGD"/>
</dbReference>
<dbReference type="GO" id="GO:0046872">
    <property type="term" value="F:metal ion binding"/>
    <property type="evidence" value="ECO:0000266"/>
    <property type="project" value="RGD"/>
</dbReference>
<dbReference type="GO" id="GO:0140487">
    <property type="term" value="F:metal ion sequestering activity"/>
    <property type="evidence" value="ECO:0000250"/>
    <property type="project" value="UniProtKB"/>
</dbReference>
<dbReference type="GO" id="GO:0030295">
    <property type="term" value="F:protein kinase activator activity"/>
    <property type="evidence" value="ECO:0000250"/>
    <property type="project" value="UniProtKB"/>
</dbReference>
<dbReference type="GO" id="GO:0008270">
    <property type="term" value="F:zinc ion binding"/>
    <property type="evidence" value="ECO:0000314"/>
    <property type="project" value="RGD"/>
</dbReference>
<dbReference type="GO" id="GO:0032148">
    <property type="term" value="P:activation of protein kinase B activity"/>
    <property type="evidence" value="ECO:0000250"/>
    <property type="project" value="UniProtKB"/>
</dbReference>
<dbReference type="GO" id="GO:1990748">
    <property type="term" value="P:cellular detoxification"/>
    <property type="evidence" value="ECO:0000250"/>
    <property type="project" value="UniProtKB"/>
</dbReference>
<dbReference type="GO" id="GO:0071276">
    <property type="term" value="P:cellular response to cadmium ion"/>
    <property type="evidence" value="ECO:0000318"/>
    <property type="project" value="GO_Central"/>
</dbReference>
<dbReference type="GO" id="GO:0071280">
    <property type="term" value="P:cellular response to copper ion"/>
    <property type="evidence" value="ECO:0000318"/>
    <property type="project" value="GO_Central"/>
</dbReference>
<dbReference type="GO" id="GO:0071456">
    <property type="term" value="P:cellular response to hypoxia"/>
    <property type="evidence" value="ECO:0000266"/>
    <property type="project" value="RGD"/>
</dbReference>
<dbReference type="GO" id="GO:0034599">
    <property type="term" value="P:cellular response to oxidative stress"/>
    <property type="evidence" value="ECO:0000266"/>
    <property type="project" value="RGD"/>
</dbReference>
<dbReference type="GO" id="GO:0034614">
    <property type="term" value="P:cellular response to reactive oxygen species"/>
    <property type="evidence" value="ECO:0000250"/>
    <property type="project" value="UniProtKB"/>
</dbReference>
<dbReference type="GO" id="GO:0071294">
    <property type="term" value="P:cellular response to zinc ion"/>
    <property type="evidence" value="ECO:0000318"/>
    <property type="project" value="GO_Central"/>
</dbReference>
<dbReference type="GO" id="GO:0071585">
    <property type="term" value="P:detoxification of cadmium ion"/>
    <property type="evidence" value="ECO:0000266"/>
    <property type="project" value="RGD"/>
</dbReference>
<dbReference type="GO" id="GO:0010273">
    <property type="term" value="P:detoxification of copper ion"/>
    <property type="evidence" value="ECO:0000318"/>
    <property type="project" value="GO_Central"/>
</dbReference>
<dbReference type="GO" id="GO:0006112">
    <property type="term" value="P:energy reserve metabolic process"/>
    <property type="evidence" value="ECO:0000250"/>
    <property type="project" value="UniProtKB"/>
</dbReference>
<dbReference type="GO" id="GO:0030003">
    <property type="term" value="P:intracellular monoatomic cation homeostasis"/>
    <property type="evidence" value="ECO:0000266"/>
    <property type="project" value="RGD"/>
</dbReference>
<dbReference type="GO" id="GO:0006882">
    <property type="term" value="P:intracellular zinc ion homeostasis"/>
    <property type="evidence" value="ECO:0000250"/>
    <property type="project" value="UniProtKB"/>
</dbReference>
<dbReference type="GO" id="GO:0033210">
    <property type="term" value="P:leptin-mediated signaling pathway"/>
    <property type="evidence" value="ECO:0000250"/>
    <property type="project" value="UniProtKB"/>
</dbReference>
<dbReference type="GO" id="GO:0043066">
    <property type="term" value="P:negative regulation of apoptotic process"/>
    <property type="evidence" value="ECO:0000266"/>
    <property type="project" value="RGD"/>
</dbReference>
<dbReference type="GO" id="GO:0030517">
    <property type="term" value="P:negative regulation of axon extension"/>
    <property type="evidence" value="ECO:0000250"/>
    <property type="project" value="UniProtKB"/>
</dbReference>
<dbReference type="GO" id="GO:0030308">
    <property type="term" value="P:negative regulation of cell growth"/>
    <property type="evidence" value="ECO:0000250"/>
    <property type="project" value="UniProtKB"/>
</dbReference>
<dbReference type="GO" id="GO:0050774">
    <property type="term" value="P:negative regulation of dendrite morphogenesis"/>
    <property type="evidence" value="ECO:0000303"/>
    <property type="project" value="UniProtKB"/>
</dbReference>
<dbReference type="GO" id="GO:2000296">
    <property type="term" value="P:negative regulation of hydrogen peroxide catabolic process"/>
    <property type="evidence" value="ECO:0000314"/>
    <property type="project" value="RGD"/>
</dbReference>
<dbReference type="GO" id="GO:0050768">
    <property type="term" value="P:negative regulation of neurogenesis"/>
    <property type="evidence" value="ECO:0000266"/>
    <property type="project" value="RGD"/>
</dbReference>
<dbReference type="GO" id="GO:0043524">
    <property type="term" value="P:negative regulation of neuron apoptotic process"/>
    <property type="evidence" value="ECO:0000250"/>
    <property type="project" value="UniProtKB"/>
</dbReference>
<dbReference type="GO" id="GO:0051354">
    <property type="term" value="P:negative regulation of oxidoreductase activity"/>
    <property type="evidence" value="ECO:0000250"/>
    <property type="project" value="UniProtKB"/>
</dbReference>
<dbReference type="GO" id="GO:0045893">
    <property type="term" value="P:positive regulation of DNA-templated transcription"/>
    <property type="evidence" value="ECO:0000250"/>
    <property type="project" value="UniProtKB"/>
</dbReference>
<dbReference type="GO" id="GO:0070374">
    <property type="term" value="P:positive regulation of ERK1 and ERK2 cascade"/>
    <property type="evidence" value="ECO:0000250"/>
    <property type="project" value="UniProtKB"/>
</dbReference>
<dbReference type="GO" id="GO:0010628">
    <property type="term" value="P:positive regulation of gene expression"/>
    <property type="evidence" value="ECO:0000250"/>
    <property type="project" value="UniProtKB"/>
</dbReference>
<dbReference type="GO" id="GO:2000376">
    <property type="term" value="P:positive regulation of oxygen metabolic process"/>
    <property type="evidence" value="ECO:0000250"/>
    <property type="project" value="UniProtKB"/>
</dbReference>
<dbReference type="GO" id="GO:0001934">
    <property type="term" value="P:positive regulation of protein phosphorylation"/>
    <property type="evidence" value="ECO:0000250"/>
    <property type="project" value="UniProtKB"/>
</dbReference>
<dbReference type="GO" id="GO:0030949">
    <property type="term" value="P:positive regulation of vascular endothelial growth factor receptor signaling pathway"/>
    <property type="evidence" value="ECO:0000250"/>
    <property type="project" value="UniProtKB"/>
</dbReference>
<dbReference type="GO" id="GO:0050821">
    <property type="term" value="P:protein stabilization"/>
    <property type="evidence" value="ECO:0000250"/>
    <property type="project" value="UniProtKB"/>
</dbReference>
<dbReference type="GO" id="GO:0032095">
    <property type="term" value="P:regulation of response to food"/>
    <property type="evidence" value="ECO:0000250"/>
    <property type="project" value="UniProtKB"/>
</dbReference>
<dbReference type="GO" id="GO:0019430">
    <property type="term" value="P:removal of superoxide radicals"/>
    <property type="evidence" value="ECO:0000250"/>
    <property type="project" value="UniProtKB"/>
</dbReference>
<dbReference type="GO" id="GO:0001666">
    <property type="term" value="P:response to hypoxia"/>
    <property type="evidence" value="ECO:0000250"/>
    <property type="project" value="UniProtKB"/>
</dbReference>
<dbReference type="GO" id="GO:0006979">
    <property type="term" value="P:response to oxidative stress"/>
    <property type="evidence" value="ECO:0000266"/>
    <property type="project" value="RGD"/>
</dbReference>
<dbReference type="GO" id="GO:0006829">
    <property type="term" value="P:zinc ion transport"/>
    <property type="evidence" value="ECO:0000250"/>
    <property type="project" value="UniProtKB"/>
</dbReference>
<dbReference type="FunFam" id="4.10.10.10:FF:000001">
    <property type="entry name" value="Metallothionein"/>
    <property type="match status" value="1"/>
</dbReference>
<dbReference type="Gene3D" id="4.10.10.10">
    <property type="entry name" value="Metallothionein Isoform II"/>
    <property type="match status" value="1"/>
</dbReference>
<dbReference type="InterPro" id="IPR017854">
    <property type="entry name" value="Metalthion_dom_sf"/>
</dbReference>
<dbReference type="InterPro" id="IPR023587">
    <property type="entry name" value="Metalthion_dom_sf_vert"/>
</dbReference>
<dbReference type="InterPro" id="IPR000006">
    <property type="entry name" value="Metalthion_vert"/>
</dbReference>
<dbReference type="InterPro" id="IPR018064">
    <property type="entry name" value="Metalthion_vert_metal_BS"/>
</dbReference>
<dbReference type="PANTHER" id="PTHR23299">
    <property type="entry name" value="METALLOTHIONEIN"/>
    <property type="match status" value="1"/>
</dbReference>
<dbReference type="PANTHER" id="PTHR23299:SF18">
    <property type="entry name" value="METALLOTHIONEIN-3"/>
    <property type="match status" value="1"/>
</dbReference>
<dbReference type="Pfam" id="PF00131">
    <property type="entry name" value="Metallothio"/>
    <property type="match status" value="1"/>
</dbReference>
<dbReference type="PRINTS" id="PR00860">
    <property type="entry name" value="MTVERTEBRATE"/>
</dbReference>
<dbReference type="SUPFAM" id="SSF57868">
    <property type="entry name" value="Metallothionein"/>
    <property type="match status" value="1"/>
</dbReference>
<dbReference type="PROSITE" id="PS00203">
    <property type="entry name" value="METALLOTHIONEIN_VRT"/>
    <property type="match status" value="1"/>
</dbReference>
<evidence type="ECO:0000250" key="1"/>
<evidence type="ECO:0000250" key="2">
    <source>
        <dbReference type="UniProtKB" id="P02795"/>
    </source>
</evidence>
<evidence type="ECO:0000250" key="3">
    <source>
        <dbReference type="UniProtKB" id="P28184"/>
    </source>
</evidence>
<evidence type="ECO:0000250" key="4">
    <source>
        <dbReference type="UniProtKB" id="P37359"/>
    </source>
</evidence>
<evidence type="ECO:0000305" key="5"/>
<protein>
    <recommendedName>
        <fullName>Metallothionein-3</fullName>
        <shortName>MT-3</shortName>
    </recommendedName>
    <alternativeName>
        <fullName>Growth inhibitory factor</fullName>
        <shortName>GIF</shortName>
    </alternativeName>
    <alternativeName>
        <fullName>Metallothionein-III</fullName>
        <shortName>MT-III</shortName>
    </alternativeName>
</protein>
<organism>
    <name type="scientific">Rattus norvegicus</name>
    <name type="common">Rat</name>
    <dbReference type="NCBI Taxonomy" id="10116"/>
    <lineage>
        <taxon>Eukaryota</taxon>
        <taxon>Metazoa</taxon>
        <taxon>Chordata</taxon>
        <taxon>Craniata</taxon>
        <taxon>Vertebrata</taxon>
        <taxon>Euteleostomi</taxon>
        <taxon>Mammalia</taxon>
        <taxon>Eutheria</taxon>
        <taxon>Euarchontoglires</taxon>
        <taxon>Glires</taxon>
        <taxon>Rodentia</taxon>
        <taxon>Myomorpha</taxon>
        <taxon>Muroidea</taxon>
        <taxon>Muridae</taxon>
        <taxon>Murinae</taxon>
        <taxon>Rattus</taxon>
    </lineage>
</organism>
<name>MT3_RAT</name>